<sequence length="262" mass="29436">MLKMRLLLTWVLLVLPLVNALKCANNRVLRKYHIDKHSAKKSVARDTPPSKTTEKWYVNPCEEHPADDIYDGCDKSDDICGIVMVDLPVFNKDPFVIKRIEATDMASFTATEESNALVLRYTGISWGQNMVAANIRYFCDKNSNEDEITSSIWANNDISIIIKGPSGCKKDSSELEDGDVEESSGLSWFTWLFIYAIFFTVVYLVVTSYTQTRGGSIDDFRHDFVERAKQFFTSLPAFVREVVSKVLGSAPNAAERGGYSAV</sequence>
<keyword id="KW-0072">Autophagy</keyword>
<keyword id="KW-0968">Cytoplasmic vesicle</keyword>
<keyword id="KW-1015">Disulfide bond</keyword>
<keyword id="KW-0333">Golgi apparatus</keyword>
<keyword id="KW-0472">Membrane</keyword>
<keyword id="KW-0496">Mitochondrion</keyword>
<keyword id="KW-0653">Protein transport</keyword>
<keyword id="KW-1185">Reference proteome</keyword>
<keyword id="KW-0732">Signal</keyword>
<keyword id="KW-0812">Transmembrane</keyword>
<keyword id="KW-1133">Transmembrane helix</keyword>
<keyword id="KW-0813">Transport</keyword>
<dbReference type="EMBL" id="DS480383">
    <property type="protein sequence ID" value="EDO18993.1"/>
    <property type="molecule type" value="Genomic_DNA"/>
</dbReference>
<dbReference type="RefSeq" id="XP_001646851.1">
    <property type="nucleotide sequence ID" value="XM_001646801.1"/>
</dbReference>
<dbReference type="FunCoup" id="A7TFH9">
    <property type="interactions" value="90"/>
</dbReference>
<dbReference type="STRING" id="436907.A7TFH9"/>
<dbReference type="GeneID" id="5547319"/>
<dbReference type="KEGG" id="vpo:Kpol_2002p64"/>
<dbReference type="eggNOG" id="ENOG502QVJJ">
    <property type="taxonomic scope" value="Eukaryota"/>
</dbReference>
<dbReference type="HOGENOM" id="CLU_089705_0_0_1"/>
<dbReference type="InParanoid" id="A7TFH9"/>
<dbReference type="OMA" id="NKGNAID"/>
<dbReference type="OrthoDB" id="29460at2759"/>
<dbReference type="PhylomeDB" id="A7TFH9"/>
<dbReference type="Proteomes" id="UP000000267">
    <property type="component" value="Unassembled WGS sequence"/>
</dbReference>
<dbReference type="GO" id="GO:0030136">
    <property type="term" value="C:clathrin-coated vesicle"/>
    <property type="evidence" value="ECO:0007669"/>
    <property type="project" value="EnsemblFungi"/>
</dbReference>
<dbReference type="GO" id="GO:0030659">
    <property type="term" value="C:cytoplasmic vesicle membrane"/>
    <property type="evidence" value="ECO:0007669"/>
    <property type="project" value="UniProtKB-SubCell"/>
</dbReference>
<dbReference type="GO" id="GO:0000139">
    <property type="term" value="C:Golgi membrane"/>
    <property type="evidence" value="ECO:0007669"/>
    <property type="project" value="UniProtKB-SubCell"/>
</dbReference>
<dbReference type="GO" id="GO:0031966">
    <property type="term" value="C:mitochondrial membrane"/>
    <property type="evidence" value="ECO:0007669"/>
    <property type="project" value="UniProtKB-SubCell"/>
</dbReference>
<dbReference type="GO" id="GO:0000407">
    <property type="term" value="C:phagophore assembly site"/>
    <property type="evidence" value="ECO:0007669"/>
    <property type="project" value="EnsemblFungi"/>
</dbReference>
<dbReference type="GO" id="GO:0005802">
    <property type="term" value="C:trans-Golgi network"/>
    <property type="evidence" value="ECO:0007669"/>
    <property type="project" value="EnsemblFungi"/>
</dbReference>
<dbReference type="GO" id="GO:0005774">
    <property type="term" value="C:vacuolar membrane"/>
    <property type="evidence" value="ECO:0007669"/>
    <property type="project" value="EnsemblFungi"/>
</dbReference>
<dbReference type="GO" id="GO:0032266">
    <property type="term" value="F:phosphatidylinositol-3-phosphate binding"/>
    <property type="evidence" value="ECO:0007669"/>
    <property type="project" value="EnsemblFungi"/>
</dbReference>
<dbReference type="GO" id="GO:0032258">
    <property type="term" value="P:cytoplasm to vacuole targeting by the Cvt pathway"/>
    <property type="evidence" value="ECO:0007669"/>
    <property type="project" value="EnsemblFungi"/>
</dbReference>
<dbReference type="GO" id="GO:0000425">
    <property type="term" value="P:pexophagy"/>
    <property type="evidence" value="ECO:0007669"/>
    <property type="project" value="EnsemblFungi"/>
</dbReference>
<dbReference type="GO" id="GO:0034497">
    <property type="term" value="P:protein localization to phagophore assembly site"/>
    <property type="evidence" value="ECO:0007669"/>
    <property type="project" value="EnsemblFungi"/>
</dbReference>
<dbReference type="GO" id="GO:0016050">
    <property type="term" value="P:vesicle organization"/>
    <property type="evidence" value="ECO:0007669"/>
    <property type="project" value="EnsemblFungi"/>
</dbReference>
<dbReference type="InterPro" id="IPR018939">
    <property type="entry name" value="Autophagy-rel_prot_27"/>
</dbReference>
<dbReference type="InterPro" id="IPR044865">
    <property type="entry name" value="MRH_dom"/>
</dbReference>
<dbReference type="Pfam" id="PF09451">
    <property type="entry name" value="ATG27"/>
    <property type="match status" value="1"/>
</dbReference>
<dbReference type="PROSITE" id="PS51914">
    <property type="entry name" value="MRH"/>
    <property type="match status" value="1"/>
</dbReference>
<name>ATG27_VANPO</name>
<evidence type="ECO:0000250" key="1"/>
<evidence type="ECO:0000255" key="2"/>
<evidence type="ECO:0000255" key="3">
    <source>
        <dbReference type="PROSITE-ProRule" id="PRU01262"/>
    </source>
</evidence>
<evidence type="ECO:0000305" key="4"/>
<feature type="signal peptide" evidence="2">
    <location>
        <begin position="1"/>
        <end position="20"/>
    </location>
</feature>
<feature type="chain" id="PRO_0000318055" description="Autophagy-related protein 27">
    <location>
        <begin position="21"/>
        <end position="262"/>
    </location>
</feature>
<feature type="topological domain" description="Lumenal" evidence="1">
    <location>
        <begin position="21"/>
        <end position="185"/>
    </location>
</feature>
<feature type="transmembrane region" description="Helical" evidence="2">
    <location>
        <begin position="186"/>
        <end position="206"/>
    </location>
</feature>
<feature type="topological domain" description="Cytoplasmic" evidence="1">
    <location>
        <begin position="207"/>
        <end position="262"/>
    </location>
</feature>
<feature type="domain" description="MRH" evidence="3">
    <location>
        <begin position="21"/>
        <end position="170"/>
    </location>
</feature>
<feature type="disulfide bond" evidence="3">
    <location>
        <begin position="23"/>
        <end position="61"/>
    </location>
</feature>
<feature type="disulfide bond" evidence="3">
    <location>
        <begin position="73"/>
        <end position="80"/>
    </location>
</feature>
<feature type="disulfide bond" evidence="3">
    <location>
        <begin position="139"/>
        <end position="168"/>
    </location>
</feature>
<comment type="function">
    <text evidence="1">Regulates the cytoplasm to vacuole transport (Cvt) vesicle formation.</text>
</comment>
<comment type="subcellular location">
    <subcellularLocation>
        <location evidence="1">Cytoplasmic vesicle membrane</location>
        <topology evidence="1">Single-pass type I membrane protein</topology>
    </subcellularLocation>
    <subcellularLocation>
        <location evidence="1">Golgi apparatus membrane</location>
        <topology evidence="1">Single-pass type I membrane protein</topology>
    </subcellularLocation>
    <subcellularLocation>
        <location evidence="1">Mitochondrion membrane</location>
        <topology evidence="1">Single-pass membrane protein</topology>
    </subcellularLocation>
    <text evidence="1">Cycles among the pre-autophagosomal structure (PAS), mitochondria and Golgi.</text>
</comment>
<comment type="similarity">
    <text evidence="4">Belongs to the ATG27 family.</text>
</comment>
<protein>
    <recommendedName>
        <fullName>Autophagy-related protein 27</fullName>
    </recommendedName>
</protein>
<reference key="1">
    <citation type="journal article" date="2007" name="Proc. Natl. Acad. Sci. U.S.A.">
        <title>Independent sorting-out of thousands of duplicated gene pairs in two yeast species descended from a whole-genome duplication.</title>
        <authorList>
            <person name="Scannell D.R."/>
            <person name="Frank A.C."/>
            <person name="Conant G.C."/>
            <person name="Byrne K.P."/>
            <person name="Woolfit M."/>
            <person name="Wolfe K.H."/>
        </authorList>
    </citation>
    <scope>NUCLEOTIDE SEQUENCE [LARGE SCALE GENOMIC DNA]</scope>
    <source>
        <strain>ATCC 22028 / DSM 70294 / BCRC 21397 / CBS 2163 / NBRC 10782 / NRRL Y-8283 / UCD 57-17</strain>
    </source>
</reference>
<accession>A7TFH9</accession>
<gene>
    <name type="primary">ATG27</name>
    <name type="ORF">Kpol_2002p64</name>
</gene>
<organism>
    <name type="scientific">Vanderwaltozyma polyspora (strain ATCC 22028 / DSM 70294 / BCRC 21397 / CBS 2163 / NBRC 10782 / NRRL Y-8283 / UCD 57-17)</name>
    <name type="common">Kluyveromyces polysporus</name>
    <dbReference type="NCBI Taxonomy" id="436907"/>
    <lineage>
        <taxon>Eukaryota</taxon>
        <taxon>Fungi</taxon>
        <taxon>Dikarya</taxon>
        <taxon>Ascomycota</taxon>
        <taxon>Saccharomycotina</taxon>
        <taxon>Saccharomycetes</taxon>
        <taxon>Saccharomycetales</taxon>
        <taxon>Saccharomycetaceae</taxon>
        <taxon>Vanderwaltozyma</taxon>
    </lineage>
</organism>
<proteinExistence type="inferred from homology"/>